<evidence type="ECO:0000255" key="1">
    <source>
        <dbReference type="HAMAP-Rule" id="MF_00005"/>
    </source>
</evidence>
<keyword id="KW-0028">Amino-acid biosynthesis</keyword>
<keyword id="KW-0055">Arginine biosynthesis</keyword>
<keyword id="KW-0067">ATP-binding</keyword>
<keyword id="KW-0963">Cytoplasm</keyword>
<keyword id="KW-0436">Ligase</keyword>
<keyword id="KW-0547">Nucleotide-binding</keyword>
<keyword id="KW-1185">Reference proteome</keyword>
<accession>Q1IIZ2</accession>
<proteinExistence type="inferred from homology"/>
<reference key="1">
    <citation type="journal article" date="2009" name="Appl. Environ. Microbiol.">
        <title>Three genomes from the phylum Acidobacteria provide insight into the lifestyles of these microorganisms in soils.</title>
        <authorList>
            <person name="Ward N.L."/>
            <person name="Challacombe J.F."/>
            <person name="Janssen P.H."/>
            <person name="Henrissat B."/>
            <person name="Coutinho P.M."/>
            <person name="Wu M."/>
            <person name="Xie G."/>
            <person name="Haft D.H."/>
            <person name="Sait M."/>
            <person name="Badger J."/>
            <person name="Barabote R.D."/>
            <person name="Bradley B."/>
            <person name="Brettin T.S."/>
            <person name="Brinkac L.M."/>
            <person name="Bruce D."/>
            <person name="Creasy T."/>
            <person name="Daugherty S.C."/>
            <person name="Davidsen T.M."/>
            <person name="DeBoy R.T."/>
            <person name="Detter J.C."/>
            <person name="Dodson R.J."/>
            <person name="Durkin A.S."/>
            <person name="Ganapathy A."/>
            <person name="Gwinn-Giglio M."/>
            <person name="Han C.S."/>
            <person name="Khouri H."/>
            <person name="Kiss H."/>
            <person name="Kothari S.P."/>
            <person name="Madupu R."/>
            <person name="Nelson K.E."/>
            <person name="Nelson W.C."/>
            <person name="Paulsen I."/>
            <person name="Penn K."/>
            <person name="Ren Q."/>
            <person name="Rosovitz M.J."/>
            <person name="Selengut J.D."/>
            <person name="Shrivastava S."/>
            <person name="Sullivan S.A."/>
            <person name="Tapia R."/>
            <person name="Thompson L.S."/>
            <person name="Watkins K.L."/>
            <person name="Yang Q."/>
            <person name="Yu C."/>
            <person name="Zafar N."/>
            <person name="Zhou L."/>
            <person name="Kuske C.R."/>
        </authorList>
    </citation>
    <scope>NUCLEOTIDE SEQUENCE [LARGE SCALE GENOMIC DNA]</scope>
    <source>
        <strain>Ellin345</strain>
    </source>
</reference>
<feature type="chain" id="PRO_0000263903" description="Argininosuccinate synthase">
    <location>
        <begin position="1"/>
        <end position="405"/>
    </location>
</feature>
<feature type="binding site" evidence="1">
    <location>
        <begin position="8"/>
        <end position="16"/>
    </location>
    <ligand>
        <name>ATP</name>
        <dbReference type="ChEBI" id="CHEBI:30616"/>
    </ligand>
</feature>
<feature type="binding site" evidence="1">
    <location>
        <position position="86"/>
    </location>
    <ligand>
        <name>L-citrulline</name>
        <dbReference type="ChEBI" id="CHEBI:57743"/>
    </ligand>
</feature>
<feature type="binding site" evidence="1">
    <location>
        <position position="91"/>
    </location>
    <ligand>
        <name>L-citrulline</name>
        <dbReference type="ChEBI" id="CHEBI:57743"/>
    </ligand>
</feature>
<feature type="binding site" evidence="1">
    <location>
        <position position="116"/>
    </location>
    <ligand>
        <name>ATP</name>
        <dbReference type="ChEBI" id="CHEBI:30616"/>
    </ligand>
</feature>
<feature type="binding site" evidence="1">
    <location>
        <position position="118"/>
    </location>
    <ligand>
        <name>L-aspartate</name>
        <dbReference type="ChEBI" id="CHEBI:29991"/>
    </ligand>
</feature>
<feature type="binding site" evidence="1">
    <location>
        <position position="122"/>
    </location>
    <ligand>
        <name>L-aspartate</name>
        <dbReference type="ChEBI" id="CHEBI:29991"/>
    </ligand>
</feature>
<feature type="binding site" evidence="1">
    <location>
        <position position="122"/>
    </location>
    <ligand>
        <name>L-citrulline</name>
        <dbReference type="ChEBI" id="CHEBI:57743"/>
    </ligand>
</feature>
<feature type="binding site" evidence="1">
    <location>
        <position position="123"/>
    </location>
    <ligand>
        <name>L-aspartate</name>
        <dbReference type="ChEBI" id="CHEBI:29991"/>
    </ligand>
</feature>
<feature type="binding site" evidence="1">
    <location>
        <position position="126"/>
    </location>
    <ligand>
        <name>L-citrulline</name>
        <dbReference type="ChEBI" id="CHEBI:57743"/>
    </ligand>
</feature>
<feature type="binding site" evidence="1">
    <location>
        <position position="175"/>
    </location>
    <ligand>
        <name>L-citrulline</name>
        <dbReference type="ChEBI" id="CHEBI:57743"/>
    </ligand>
</feature>
<feature type="binding site" evidence="1">
    <location>
        <position position="184"/>
    </location>
    <ligand>
        <name>L-citrulline</name>
        <dbReference type="ChEBI" id="CHEBI:57743"/>
    </ligand>
</feature>
<feature type="binding site" evidence="1">
    <location>
        <position position="260"/>
    </location>
    <ligand>
        <name>L-citrulline</name>
        <dbReference type="ChEBI" id="CHEBI:57743"/>
    </ligand>
</feature>
<feature type="binding site" evidence="1">
    <location>
        <position position="272"/>
    </location>
    <ligand>
        <name>L-citrulline</name>
        <dbReference type="ChEBI" id="CHEBI:57743"/>
    </ligand>
</feature>
<protein>
    <recommendedName>
        <fullName evidence="1">Argininosuccinate synthase</fullName>
        <ecNumber evidence="1">6.3.4.5</ecNumber>
    </recommendedName>
    <alternativeName>
        <fullName evidence="1">Citrulline--aspartate ligase</fullName>
    </alternativeName>
</protein>
<comment type="catalytic activity">
    <reaction evidence="1">
        <text>L-citrulline + L-aspartate + ATP = 2-(N(omega)-L-arginino)succinate + AMP + diphosphate + H(+)</text>
        <dbReference type="Rhea" id="RHEA:10932"/>
        <dbReference type="ChEBI" id="CHEBI:15378"/>
        <dbReference type="ChEBI" id="CHEBI:29991"/>
        <dbReference type="ChEBI" id="CHEBI:30616"/>
        <dbReference type="ChEBI" id="CHEBI:33019"/>
        <dbReference type="ChEBI" id="CHEBI:57472"/>
        <dbReference type="ChEBI" id="CHEBI:57743"/>
        <dbReference type="ChEBI" id="CHEBI:456215"/>
        <dbReference type="EC" id="6.3.4.5"/>
    </reaction>
</comment>
<comment type="pathway">
    <text evidence="1">Amino-acid biosynthesis; L-arginine biosynthesis; L-arginine from L-ornithine and carbamoyl phosphate: step 2/3.</text>
</comment>
<comment type="subunit">
    <text evidence="1">Homotetramer.</text>
</comment>
<comment type="subcellular location">
    <subcellularLocation>
        <location evidence="1">Cytoplasm</location>
    </subcellularLocation>
</comment>
<comment type="similarity">
    <text evidence="1">Belongs to the argininosuccinate synthase family. Type 1 subfamily.</text>
</comment>
<gene>
    <name evidence="1" type="primary">argG</name>
    <name type="ordered locus">Acid345_4158</name>
</gene>
<dbReference type="EC" id="6.3.4.5" evidence="1"/>
<dbReference type="EMBL" id="CP000360">
    <property type="protein sequence ID" value="ABF43158.1"/>
    <property type="molecule type" value="Genomic_DNA"/>
</dbReference>
<dbReference type="RefSeq" id="WP_011524957.1">
    <property type="nucleotide sequence ID" value="NC_008009.1"/>
</dbReference>
<dbReference type="SMR" id="Q1IIZ2"/>
<dbReference type="STRING" id="204669.Acid345_4158"/>
<dbReference type="EnsemblBacteria" id="ABF43158">
    <property type="protein sequence ID" value="ABF43158"/>
    <property type="gene ID" value="Acid345_4158"/>
</dbReference>
<dbReference type="KEGG" id="aba:Acid345_4158"/>
<dbReference type="eggNOG" id="COG0137">
    <property type="taxonomic scope" value="Bacteria"/>
</dbReference>
<dbReference type="HOGENOM" id="CLU_032784_4_2_0"/>
<dbReference type="OrthoDB" id="9801641at2"/>
<dbReference type="UniPathway" id="UPA00068">
    <property type="reaction ID" value="UER00113"/>
</dbReference>
<dbReference type="Proteomes" id="UP000002432">
    <property type="component" value="Chromosome"/>
</dbReference>
<dbReference type="GO" id="GO:0005737">
    <property type="term" value="C:cytoplasm"/>
    <property type="evidence" value="ECO:0007669"/>
    <property type="project" value="UniProtKB-SubCell"/>
</dbReference>
<dbReference type="GO" id="GO:0004055">
    <property type="term" value="F:argininosuccinate synthase activity"/>
    <property type="evidence" value="ECO:0007669"/>
    <property type="project" value="UniProtKB-UniRule"/>
</dbReference>
<dbReference type="GO" id="GO:0005524">
    <property type="term" value="F:ATP binding"/>
    <property type="evidence" value="ECO:0007669"/>
    <property type="project" value="UniProtKB-UniRule"/>
</dbReference>
<dbReference type="GO" id="GO:0000053">
    <property type="term" value="P:argininosuccinate metabolic process"/>
    <property type="evidence" value="ECO:0007669"/>
    <property type="project" value="TreeGrafter"/>
</dbReference>
<dbReference type="GO" id="GO:0006526">
    <property type="term" value="P:L-arginine biosynthetic process"/>
    <property type="evidence" value="ECO:0007669"/>
    <property type="project" value="UniProtKB-UniRule"/>
</dbReference>
<dbReference type="GO" id="GO:0000050">
    <property type="term" value="P:urea cycle"/>
    <property type="evidence" value="ECO:0007669"/>
    <property type="project" value="TreeGrafter"/>
</dbReference>
<dbReference type="CDD" id="cd01999">
    <property type="entry name" value="ASS"/>
    <property type="match status" value="1"/>
</dbReference>
<dbReference type="FunFam" id="3.40.50.620:FF:000019">
    <property type="entry name" value="Argininosuccinate synthase"/>
    <property type="match status" value="1"/>
</dbReference>
<dbReference type="FunFam" id="3.90.1260.10:FF:000007">
    <property type="entry name" value="Argininosuccinate synthase"/>
    <property type="match status" value="1"/>
</dbReference>
<dbReference type="Gene3D" id="3.90.1260.10">
    <property type="entry name" value="Argininosuccinate synthetase, chain A, domain 2"/>
    <property type="match status" value="1"/>
</dbReference>
<dbReference type="Gene3D" id="3.40.50.620">
    <property type="entry name" value="HUPs"/>
    <property type="match status" value="1"/>
</dbReference>
<dbReference type="Gene3D" id="1.20.5.470">
    <property type="entry name" value="Single helix bin"/>
    <property type="match status" value="1"/>
</dbReference>
<dbReference type="HAMAP" id="MF_00005">
    <property type="entry name" value="Arg_succ_synth_type1"/>
    <property type="match status" value="1"/>
</dbReference>
<dbReference type="InterPro" id="IPR048268">
    <property type="entry name" value="Arginosuc_syn_C"/>
</dbReference>
<dbReference type="InterPro" id="IPR048267">
    <property type="entry name" value="Arginosuc_syn_N"/>
</dbReference>
<dbReference type="InterPro" id="IPR001518">
    <property type="entry name" value="Arginosuc_synth"/>
</dbReference>
<dbReference type="InterPro" id="IPR018223">
    <property type="entry name" value="Arginosuc_synth_CS"/>
</dbReference>
<dbReference type="InterPro" id="IPR023434">
    <property type="entry name" value="Arginosuc_synth_type_1_subfam"/>
</dbReference>
<dbReference type="InterPro" id="IPR024074">
    <property type="entry name" value="AS_cat/multimer_dom_body"/>
</dbReference>
<dbReference type="InterPro" id="IPR014729">
    <property type="entry name" value="Rossmann-like_a/b/a_fold"/>
</dbReference>
<dbReference type="NCBIfam" id="TIGR00032">
    <property type="entry name" value="argG"/>
    <property type="match status" value="1"/>
</dbReference>
<dbReference type="NCBIfam" id="NF001770">
    <property type="entry name" value="PRK00509.1"/>
    <property type="match status" value="1"/>
</dbReference>
<dbReference type="PANTHER" id="PTHR11587">
    <property type="entry name" value="ARGININOSUCCINATE SYNTHASE"/>
    <property type="match status" value="1"/>
</dbReference>
<dbReference type="PANTHER" id="PTHR11587:SF2">
    <property type="entry name" value="ARGININOSUCCINATE SYNTHASE"/>
    <property type="match status" value="1"/>
</dbReference>
<dbReference type="Pfam" id="PF20979">
    <property type="entry name" value="Arginosuc_syn_C"/>
    <property type="match status" value="1"/>
</dbReference>
<dbReference type="Pfam" id="PF00764">
    <property type="entry name" value="Arginosuc_synth"/>
    <property type="match status" value="1"/>
</dbReference>
<dbReference type="SUPFAM" id="SSF52402">
    <property type="entry name" value="Adenine nucleotide alpha hydrolases-like"/>
    <property type="match status" value="1"/>
</dbReference>
<dbReference type="SUPFAM" id="SSF69864">
    <property type="entry name" value="Argininosuccinate synthetase, C-terminal domain"/>
    <property type="match status" value="1"/>
</dbReference>
<dbReference type="PROSITE" id="PS00564">
    <property type="entry name" value="ARGININOSUCCIN_SYN_1"/>
    <property type="match status" value="1"/>
</dbReference>
<dbReference type="PROSITE" id="PS00565">
    <property type="entry name" value="ARGININOSUCCIN_SYN_2"/>
    <property type="match status" value="1"/>
</dbReference>
<sequence length="405" mass="44366">MREKIVLAYSGGLDTSIIIPWLKENYSCDVIAMVGDVGQGDDIDAVVAKAHKTGASKVIVKDLREEFLTQYVYPAISTGAVYEHKYLLGTSLARPPIAKAQVEVALAEGATAVSHGCTGKGNDQVRFEHAFQALAPELKIIAPWREWTLKSREDCLDYAEAHGISVAQSREKIHSRDRNLLHVSHEGGELEDPNNAPLDTTWTWTKSPQEAPDRVEEVTIGFEGGVPVSINGMKLEPLALIELLNEIGARNAIGRIDLVENRFVGIKSRGCYETPGGSLLLAAHRELEALCLDRDTLHYKQEVALKWAELVYFGLWFTPLRESLDAFVASTQKNIAGAVKLALYKGNIAVAGRTSPKSLYRPDIASFTMGAGYDQKDAEGFIRILGLPARSRALIENAGKEKVSK</sequence>
<organism>
    <name type="scientific">Koribacter versatilis (strain Ellin345)</name>
    <dbReference type="NCBI Taxonomy" id="204669"/>
    <lineage>
        <taxon>Bacteria</taxon>
        <taxon>Pseudomonadati</taxon>
        <taxon>Acidobacteriota</taxon>
        <taxon>Terriglobia</taxon>
        <taxon>Terriglobales</taxon>
        <taxon>Candidatus Korobacteraceae</taxon>
        <taxon>Candidatus Korobacter</taxon>
    </lineage>
</organism>
<name>ASSY_KORVE</name>